<dbReference type="EC" id="2.1.2.7" evidence="1 2"/>
<dbReference type="EMBL" id="AB426469">
    <property type="protein sequence ID" value="BAG31001.1"/>
    <property type="molecule type" value="Genomic_DNA"/>
</dbReference>
<dbReference type="SMR" id="B2DEU8"/>
<dbReference type="BRENDA" id="2.1.2.7">
    <property type="organism ID" value="11477"/>
</dbReference>
<dbReference type="UniPathway" id="UPA00193"/>
<dbReference type="GO" id="GO:0005829">
    <property type="term" value="C:cytosol"/>
    <property type="evidence" value="ECO:0007669"/>
    <property type="project" value="TreeGrafter"/>
</dbReference>
<dbReference type="GO" id="GO:0050413">
    <property type="term" value="F:D-alanine 2-hydroxymethyltransferase activity"/>
    <property type="evidence" value="ECO:0007669"/>
    <property type="project" value="RHEA"/>
</dbReference>
<dbReference type="GO" id="GO:0004372">
    <property type="term" value="F:glycine hydroxymethyltransferase activity"/>
    <property type="evidence" value="ECO:0007669"/>
    <property type="project" value="UniProtKB-EC"/>
</dbReference>
<dbReference type="GO" id="GO:0030170">
    <property type="term" value="F:pyridoxal phosphate binding"/>
    <property type="evidence" value="ECO:0007669"/>
    <property type="project" value="UniProtKB-UniRule"/>
</dbReference>
<dbReference type="GO" id="GO:0019264">
    <property type="term" value="P:glycine biosynthetic process from serine"/>
    <property type="evidence" value="ECO:0007669"/>
    <property type="project" value="InterPro"/>
</dbReference>
<dbReference type="GO" id="GO:0035999">
    <property type="term" value="P:tetrahydrofolate interconversion"/>
    <property type="evidence" value="ECO:0007669"/>
    <property type="project" value="UniProtKB-UniRule"/>
</dbReference>
<dbReference type="CDD" id="cd00378">
    <property type="entry name" value="SHMT"/>
    <property type="match status" value="1"/>
</dbReference>
<dbReference type="FunFam" id="3.40.640.10:FF:000001">
    <property type="entry name" value="Serine hydroxymethyltransferase"/>
    <property type="match status" value="1"/>
</dbReference>
<dbReference type="Gene3D" id="3.90.1150.10">
    <property type="entry name" value="Aspartate Aminotransferase, domain 1"/>
    <property type="match status" value="1"/>
</dbReference>
<dbReference type="Gene3D" id="3.40.640.10">
    <property type="entry name" value="Type I PLP-dependent aspartate aminotransferase-like (Major domain)"/>
    <property type="match status" value="1"/>
</dbReference>
<dbReference type="HAMAP" id="MF_00051">
    <property type="entry name" value="SHMT"/>
    <property type="match status" value="1"/>
</dbReference>
<dbReference type="InterPro" id="IPR015424">
    <property type="entry name" value="PyrdxlP-dep_Trfase"/>
</dbReference>
<dbReference type="InterPro" id="IPR015421">
    <property type="entry name" value="PyrdxlP-dep_Trfase_major"/>
</dbReference>
<dbReference type="InterPro" id="IPR015422">
    <property type="entry name" value="PyrdxlP-dep_Trfase_small"/>
</dbReference>
<dbReference type="InterPro" id="IPR001085">
    <property type="entry name" value="Ser_HO-MeTrfase"/>
</dbReference>
<dbReference type="InterPro" id="IPR049943">
    <property type="entry name" value="Ser_HO-MeTrfase-like"/>
</dbReference>
<dbReference type="InterPro" id="IPR039429">
    <property type="entry name" value="SHMT-like_dom"/>
</dbReference>
<dbReference type="NCBIfam" id="NF000586">
    <property type="entry name" value="PRK00011.1"/>
    <property type="match status" value="1"/>
</dbReference>
<dbReference type="PANTHER" id="PTHR11680">
    <property type="entry name" value="SERINE HYDROXYMETHYLTRANSFERASE"/>
    <property type="match status" value="1"/>
</dbReference>
<dbReference type="PANTHER" id="PTHR11680:SF35">
    <property type="entry name" value="SERINE HYDROXYMETHYLTRANSFERASE 1"/>
    <property type="match status" value="1"/>
</dbReference>
<dbReference type="Pfam" id="PF00464">
    <property type="entry name" value="SHMT"/>
    <property type="match status" value="1"/>
</dbReference>
<dbReference type="PIRSF" id="PIRSF000412">
    <property type="entry name" value="SHMT"/>
    <property type="match status" value="1"/>
</dbReference>
<dbReference type="SUPFAM" id="SSF53383">
    <property type="entry name" value="PLP-dependent transferases"/>
    <property type="match status" value="1"/>
</dbReference>
<evidence type="ECO:0000255" key="1">
    <source>
        <dbReference type="HAMAP-Rule" id="MF_00051"/>
    </source>
</evidence>
<evidence type="ECO:0000269" key="2">
    <source>
    </source>
</evidence>
<evidence type="ECO:0000303" key="3">
    <source>
    </source>
</evidence>
<evidence type="ECO:0000305" key="4"/>
<evidence type="ECO:0000305" key="5">
    <source>
    </source>
</evidence>
<evidence type="ECO:0000312" key="6">
    <source>
        <dbReference type="EMBL" id="BAG31001.1"/>
    </source>
</evidence>
<sequence>MTEQTKAYFNTPVHERDPLVAQALDNERKRQQDQIELIASENIVSRAVLDALGHEMTNKTLEGYPGNRFHGGGQFVDVVEQAAIDRAKELFGCAYANVQPHSGTQANLAVFFLLLKPGDKVLSLDLAAGGHLSHGMKGNLSGRWFESHNYNVDPETEVIDYDEMERIAEEVRPTLLITGGSAYPRELDFERMGKIAKKVGAWFLVDMAHIAGLVAGGAHPSPFPHADIVTCTTTKTLRGPRGGLILTNNEAWFKKLQSAVFPGVQGSLHSNVLAAKAVCLGEALRPDFKVYAAQVKANARVLAETLIARGVRIVSGGTDTHIVLVDLSSKGLNGKQAEDLLARANITANKNPIPNDSPRPAEWVGMRLGVSAATTRGMKEDEFRTLGTVIADLIEAEAAGNADGVVEGAKAKVATLTAAFPVYAH</sequence>
<accession>B2DEU8</accession>
<protein>
    <recommendedName>
        <fullName evidence="1 4">2-methylserine hydroxymethyltransferase</fullName>
        <shortName evidence="1 3">MSHMT</shortName>
        <ecNumber evidence="1 2">2.1.2.7</ecNumber>
    </recommendedName>
    <alternativeName>
        <fullName evidence="3">AHMT</fullName>
    </alternativeName>
    <alternativeName>
        <fullName evidence="1 3">Alpha-methylserine hydroxymethyltransferase</fullName>
    </alternativeName>
    <alternativeName>
        <fullName evidence="1 4">D-alanine 2-hydroxymethyltransferase</fullName>
    </alternativeName>
</protein>
<comment type="function">
    <text evidence="2">Catalyzes the reversible interconversion of alpha-methyl-L-serine to D-alanine with tetrahydrofolate (THF) serving as the one-carbon carrier. Cannot use alpha-methyl-D-serine, L-serine, D-serine or L-alanine.</text>
</comment>
<comment type="catalytic activity">
    <reaction evidence="1 2">
        <text>(6R)-5,10-methylene-5,6,7,8-tetrahydrofolate + D-alanine + H2O = 2-methylserine + (6S)-5,6,7,8-tetrahydrofolate</text>
        <dbReference type="Rhea" id="RHEA:10064"/>
        <dbReference type="ChEBI" id="CHEBI:15377"/>
        <dbReference type="ChEBI" id="CHEBI:15636"/>
        <dbReference type="ChEBI" id="CHEBI:57416"/>
        <dbReference type="ChEBI" id="CHEBI:57453"/>
        <dbReference type="ChEBI" id="CHEBI:58275"/>
        <dbReference type="EC" id="2.1.2.7"/>
    </reaction>
</comment>
<comment type="cofactor">
    <cofactor evidence="1 2">
        <name>pyridoxal 5'-phosphate</name>
        <dbReference type="ChEBI" id="CHEBI:597326"/>
    </cofactor>
</comment>
<comment type="biophysicochemical properties">
    <kinetics>
        <KM evidence="2">1500 uM for alpha-methyl-L-serine</KM>
        <KM evidence="2">90 uM for tetrahydrofolate</KM>
        <Vmax evidence="2">22.1 umol/min/mg enzyme with alpha-methyl-L-serine as substrate</Vmax>
        <Vmax evidence="2">7.75 umol/min/mg enzyme with D-alanine as substrate</Vmax>
    </kinetics>
</comment>
<comment type="pathway">
    <text evidence="1">One-carbon metabolism; tetrahydrofolate interconversion.</text>
</comment>
<comment type="subunit">
    <text evidence="1 2">Homodimer.</text>
</comment>
<comment type="subcellular location">
    <subcellularLocation>
        <location evidence="1">Cytoplasm</location>
    </subcellularLocation>
</comment>
<comment type="similarity">
    <text evidence="1">Belongs to the SHMT family.</text>
</comment>
<name>MSHMT_AMISX</name>
<keyword id="KW-0963">Cytoplasm</keyword>
<keyword id="KW-0554">One-carbon metabolism</keyword>
<keyword id="KW-0663">Pyridoxal phosphate</keyword>
<keyword id="KW-0808">Transferase</keyword>
<proteinExistence type="evidence at protein level"/>
<gene>
    <name evidence="1 6" type="primary">mshmt</name>
</gene>
<reference key="1">
    <citation type="journal article" date="2008" name="Biosci. Biotechnol. Biochem.">
        <title>Cloning of the gene encoding alpha-methylserine hydroxymethyltransferase from Aminobacter sp. AJ110403 and Ensifer sp. AJ110404 and characterization of the recombinant enzyme.</title>
        <authorList>
            <person name="Nozaki H."/>
            <person name="Kuroda S."/>
            <person name="Watanabe K."/>
            <person name="Yokozeki K."/>
        </authorList>
    </citation>
    <scope>NUCLEOTIDE SEQUENCE [GENOMIC DNA]</scope>
    <scope>FUNCTION</scope>
    <scope>CATALYTIC ACTIVITY</scope>
    <scope>COFACTOR</scope>
    <scope>BIOPHYSICOCHEMICAL PROPERTIES</scope>
    <scope>SUBUNIT</scope>
    <source>
        <strain>AJ110403</strain>
    </source>
</reference>
<organism>
    <name type="scientific">Aminobacter sp</name>
    <dbReference type="NCBI Taxonomy" id="1872490"/>
    <lineage>
        <taxon>Bacteria</taxon>
        <taxon>Pseudomonadati</taxon>
        <taxon>Pseudomonadota</taxon>
        <taxon>Alphaproteobacteria</taxon>
        <taxon>Hyphomicrobiales</taxon>
        <taxon>Phyllobacteriaceae</taxon>
        <taxon>Aminobacter</taxon>
    </lineage>
</organism>
<feature type="chain" id="PRO_0000455995" description="2-methylserine hydroxymethyltransferase">
    <location>
        <begin position="1"/>
        <end position="425"/>
    </location>
</feature>
<feature type="binding site" evidence="1">
    <location>
        <position position="126"/>
    </location>
    <ligand>
        <name>(6S)-5,6,7,8-tetrahydrofolate</name>
        <dbReference type="ChEBI" id="CHEBI:57453"/>
    </ligand>
</feature>
<feature type="binding site" evidence="1">
    <location>
        <begin position="130"/>
        <end position="132"/>
    </location>
    <ligand>
        <name>(6S)-5,6,7,8-tetrahydrofolate</name>
        <dbReference type="ChEBI" id="CHEBI:57453"/>
    </ligand>
</feature>
<feature type="site" description="Plays an important role in substrate specificity" evidence="1 5">
    <location>
        <position position="234"/>
    </location>
</feature>
<feature type="modified residue" description="N6-(pyridoxal phosphate)lysine" evidence="1">
    <location>
        <position position="235"/>
    </location>
</feature>